<name>ELP1_RABIT</name>
<dbReference type="EMBL" id="AF388202">
    <property type="protein sequence ID" value="AAL40927.1"/>
    <property type="molecule type" value="mRNA"/>
</dbReference>
<dbReference type="RefSeq" id="NP_001076124.1">
    <property type="nucleotide sequence ID" value="NM_001082655.1"/>
</dbReference>
<dbReference type="SMR" id="Q8WND5"/>
<dbReference type="FunCoup" id="Q8WND5">
    <property type="interactions" value="1616"/>
</dbReference>
<dbReference type="STRING" id="9986.ENSOCUP00000001614"/>
<dbReference type="PaxDb" id="9986-ENSOCUP00000001614"/>
<dbReference type="GeneID" id="100009360"/>
<dbReference type="KEGG" id="ocu:100009360"/>
<dbReference type="CTD" id="8518"/>
<dbReference type="eggNOG" id="KOG1920">
    <property type="taxonomic scope" value="Eukaryota"/>
</dbReference>
<dbReference type="InParanoid" id="Q8WND5"/>
<dbReference type="OrthoDB" id="40048at2759"/>
<dbReference type="UniPathway" id="UPA00988"/>
<dbReference type="Proteomes" id="UP000001811">
    <property type="component" value="Unplaced"/>
</dbReference>
<dbReference type="GO" id="GO:0005737">
    <property type="term" value="C:cytoplasm"/>
    <property type="evidence" value="ECO:0000250"/>
    <property type="project" value="UniProtKB"/>
</dbReference>
<dbReference type="GO" id="GO:0005829">
    <property type="term" value="C:cytosol"/>
    <property type="evidence" value="ECO:0007669"/>
    <property type="project" value="TreeGrafter"/>
</dbReference>
<dbReference type="GO" id="GO:0033588">
    <property type="term" value="C:elongator holoenzyme complex"/>
    <property type="evidence" value="ECO:0000250"/>
    <property type="project" value="UniProtKB"/>
</dbReference>
<dbReference type="GO" id="GO:0005634">
    <property type="term" value="C:nucleus"/>
    <property type="evidence" value="ECO:0007669"/>
    <property type="project" value="UniProtKB-SubCell"/>
</dbReference>
<dbReference type="GO" id="GO:0000049">
    <property type="term" value="F:tRNA binding"/>
    <property type="evidence" value="ECO:0007669"/>
    <property type="project" value="TreeGrafter"/>
</dbReference>
<dbReference type="GO" id="GO:0002926">
    <property type="term" value="P:tRNA wobble base 5-methoxycarbonylmethyl-2-thiouridinylation"/>
    <property type="evidence" value="ECO:0007669"/>
    <property type="project" value="TreeGrafter"/>
</dbReference>
<dbReference type="FunFam" id="2.130.10.10:FF:000737">
    <property type="entry name" value="Elongator complex protein 1"/>
    <property type="match status" value="1"/>
</dbReference>
<dbReference type="Gene3D" id="2.130.10.10">
    <property type="entry name" value="YVTN repeat-like/Quinoprotein amine dehydrogenase"/>
    <property type="match status" value="1"/>
</dbReference>
<dbReference type="InterPro" id="IPR056167">
    <property type="entry name" value="A-sol_ELP1"/>
</dbReference>
<dbReference type="InterPro" id="IPR006849">
    <property type="entry name" value="Elp1"/>
</dbReference>
<dbReference type="InterPro" id="IPR056165">
    <property type="entry name" value="ELP1_b-prop_2"/>
</dbReference>
<dbReference type="InterPro" id="IPR056164">
    <property type="entry name" value="ELP1_N_b-prop_1"/>
</dbReference>
<dbReference type="InterPro" id="IPR056169">
    <property type="entry name" value="HB_ELP1"/>
</dbReference>
<dbReference type="InterPro" id="IPR056166">
    <property type="entry name" value="TPR_ELP1"/>
</dbReference>
<dbReference type="InterPro" id="IPR015943">
    <property type="entry name" value="WD40/YVTN_repeat-like_dom_sf"/>
</dbReference>
<dbReference type="PANTHER" id="PTHR12747">
    <property type="entry name" value="ELONGATOR COMPLEX PROTEIN 1"/>
    <property type="match status" value="1"/>
</dbReference>
<dbReference type="PANTHER" id="PTHR12747:SF0">
    <property type="entry name" value="ELONGATOR COMPLEX PROTEIN 1"/>
    <property type="match status" value="1"/>
</dbReference>
<dbReference type="Pfam" id="PF23925">
    <property type="entry name" value="A-sol_ELP1"/>
    <property type="match status" value="1"/>
</dbReference>
<dbReference type="Pfam" id="PF04762">
    <property type="entry name" value="Beta-prop_ELP1_1st"/>
    <property type="match status" value="1"/>
</dbReference>
<dbReference type="Pfam" id="PF23797">
    <property type="entry name" value="Beta-prop_ELP1_2nd"/>
    <property type="match status" value="1"/>
</dbReference>
<dbReference type="Pfam" id="PF23936">
    <property type="entry name" value="HB_ELP1"/>
    <property type="match status" value="1"/>
</dbReference>
<dbReference type="Pfam" id="PF23878">
    <property type="entry name" value="TPR_ELP1"/>
    <property type="match status" value="1"/>
</dbReference>
<dbReference type="PIRSF" id="PIRSF017233">
    <property type="entry name" value="IKAP"/>
    <property type="match status" value="1"/>
</dbReference>
<dbReference type="SUPFAM" id="SSF69322">
    <property type="entry name" value="Tricorn protease domain 2"/>
    <property type="match status" value="1"/>
</dbReference>
<accession>Q8WND5</accession>
<protein>
    <recommendedName>
        <fullName>Elongator complex protein 1</fullName>
        <shortName>ELP1</shortName>
    </recommendedName>
    <alternativeName>
        <fullName>IkappaB kinase complex-associated protein</fullName>
        <shortName>IKK complex-associated protein</shortName>
    </alternativeName>
</protein>
<proteinExistence type="evidence at transcript level"/>
<comment type="function">
    <text evidence="2 3 4">Component of the elongator complex which is required for multiple tRNA modifications, including mcm5U (5-methoxycarbonylmethyl uridine), mcm5s2U (5-methoxycarbonylmethyl-2-thiouridine), and ncm5U (5-carbamoylmethyl uridine) (By similarity). The elongator complex catalyzes the formation of carboxymethyluridine in the wobble base at position 34 in tRNAs (By similarity). Regulates the migration and branching of projection neurons in the developing cerebral cortex, through a process depending on alpha-tubulin acetylation (By similarity). ELP1 binds to tRNA, mediating interaction of the elongator complex with tRNA (By similarity). May act as a scaffold protein that assembles active IKK-MAP3K14 complexes (IKKA, IKKB and MAP3K14/NIK) (By similarity).</text>
</comment>
<comment type="pathway">
    <text evidence="2">tRNA modification; 5-methoxycarbonylmethyl-2-thiouridine-tRNA biosynthesis.</text>
</comment>
<comment type="subunit">
    <text evidence="2">Homodimer; dimerization promotes ELP1 stability and elongator complex formation. Component of the elongator complex which consists of ELP1, ELP2, ELP3, ELP4, ELP5 and ELP6. Interacts preferentially with MAP3K14/NIK followed by IKK-alpha and IKK-beta.</text>
</comment>
<comment type="subcellular location">
    <subcellularLocation>
        <location evidence="2">Cytoplasm</location>
    </subcellularLocation>
    <subcellularLocation>
        <location evidence="2">Nucleus</location>
    </subcellularLocation>
</comment>
<comment type="PTM">
    <text evidence="1">Phosphorylated.</text>
</comment>
<comment type="similarity">
    <text evidence="6">Belongs to the ELP1/IKA1 family.</text>
</comment>
<comment type="caution">
    <text evidence="2">The elongator complex was originally thought to play a role in transcription elongation. However, it is no longer thought to play a direct role in this process and its primary function is thought to be in tRNA modification.</text>
</comment>
<evidence type="ECO:0000250" key="1"/>
<evidence type="ECO:0000250" key="2">
    <source>
        <dbReference type="UniProtKB" id="O95163"/>
    </source>
</evidence>
<evidence type="ECO:0000250" key="3">
    <source>
        <dbReference type="UniProtKB" id="Q06706"/>
    </source>
</evidence>
<evidence type="ECO:0000250" key="4">
    <source>
        <dbReference type="UniProtKB" id="Q7TT37"/>
    </source>
</evidence>
<evidence type="ECO:0000256" key="5">
    <source>
        <dbReference type="SAM" id="MobiDB-lite"/>
    </source>
</evidence>
<evidence type="ECO:0000305" key="6"/>
<feature type="chain" id="PRO_0000283996" description="Elongator complex protein 1">
    <location>
        <begin position="1"/>
        <end position="1333"/>
    </location>
</feature>
<feature type="region of interest" description="Mediates dimerization" evidence="2">
    <location>
        <begin position="886"/>
        <end position="1333"/>
    </location>
</feature>
<feature type="region of interest" description="Disordered" evidence="5">
    <location>
        <begin position="1177"/>
        <end position="1209"/>
    </location>
</feature>
<feature type="region of interest" description="Required for binding to tRNA" evidence="3">
    <location>
        <begin position="1192"/>
        <end position="1210"/>
    </location>
</feature>
<feature type="compositionally biased region" description="Basic residues" evidence="5">
    <location>
        <begin position="1195"/>
        <end position="1207"/>
    </location>
</feature>
<feature type="modified residue" description="Phosphoserine" evidence="2">
    <location>
        <position position="805"/>
    </location>
</feature>
<feature type="modified residue" description="Phosphoserine" evidence="2">
    <location>
        <position position="868"/>
    </location>
</feature>
<feature type="modified residue" description="Phosphoserine" evidence="2">
    <location>
        <position position="1172"/>
    </location>
</feature>
<feature type="modified residue" description="Phosphoserine" evidence="2">
    <location>
        <position position="1175"/>
    </location>
</feature>
<reference key="1">
    <citation type="journal article" date="2001" name="Gene">
        <title>Genomic organization and chromosomal localization of the mouse IKBKAP gene.</title>
        <authorList>
            <person name="Coli R."/>
            <person name="Anderson S.L."/>
            <person name="Volpi S.A."/>
            <person name="Rubin B.Y."/>
        </authorList>
    </citation>
    <scope>NUCLEOTIDE SEQUENCE [MRNA]</scope>
</reference>
<keyword id="KW-0963">Cytoplasm</keyword>
<keyword id="KW-0539">Nucleus</keyword>
<keyword id="KW-0597">Phosphoprotein</keyword>
<keyword id="KW-1185">Reference proteome</keyword>
<keyword id="KW-0819">tRNA processing</keyword>
<sequence>MRNLKLLQTLEFKDIQAPGKPQCFSLRTEPGTVLIGSEHGLIEVDPVTREVKNEIPLVAEGFLPEDKSGCIVGIQDLLDQESVCIATASGDVILCNLSTHQLECVGSVASGISVMSWSPDQELVLLATGQQTLIMMTKDFEPIMEQQIHQDDFGESKFITVGWGKKETQFHGSEGRQAAFQIQTHESALPWDDHRPRVTWRGDGQFFAVSVVCPETGARKVRVWNREFALQSTSEPVPGLGPALAWKPSGSLIASTQNKPNQQDVVFFEKNGLLHGQFTLPFLKDEVKVNDLLWNADSSVLAVWLEDLQREEDSVLKTYVQLWTVGNYHWYLNECLPFSTYGKSKIVSLMWDPVIPYRLHVLCQGWHYLCYDWRWTTDRSSGDNESDLANVAVIDGNRILVTVFQQTVVPPPMCTYRLLLPHPVNQVTFCALPKKSNDLAVLDASNQISVYKCGDSPSMDPTVKLGAVGGNGFKVSLRTPHLEKRYKIQFESNEDQETNPLKLSLLSWIEEDIFLAICHSQCSPQQSVIHRLTVVPCEVDEEQGQLSVSSSISVDGIIISMCCNSKTKSVALQLADGQILKYIWESPSLAVEPWKNPGGFPIQFPYPCIQTELAMIGGEECVLGLTDRCRFFINDTEVASNITSFAVYDEFLLLTTHSHTCQCYCLKDASIKTLQAGLSSSHVSNGEILRKVERGSRIVTVVPQDTKLILQMPRGNLEVVHHRALVLAQIRKWLDKIMFKEAFECMRKLRINLNLIHDHNPEVFLQNVETFIRQIDCVNHINLFFTELKEEDVTKTMYPPPVPSSVQQSRDPGGTKLDLICDALRVAMENINPHKYCLPILTSHVKKTTPELEIVLQKVHELQGNAPSDPDAVSAEEALKYLLLLVDVNELYDHSLGTYDFDLVLMVAEKSQKDPKEYLPFLNTLKKMETNYQRFTIDKYLKRYEKAIGHLSKCGPEYFSECLNLIKDKNLYNEALKLYPPTSQEYKDISIAYGEHLMEEHQYEPAGLVFARCGAHEKALSAFLTCGSWQQTLCMAAQLNMTEEQLAGLGRTLAGKLAEQRKHSDAAIVLEQYTQDYEEAVLLLLEGAAWEEALRLVYKYNRLDIIETNIKPSILEAYKNYMAFLESQSATFSRHKERLLEVRELKERAQQVDLDDEMPHGQEADLFSETSSIVSGSEMSSKYSHSNSRISARSSKNRRKAERKKHSLKEGSPLEDLALLEALNEVVQSLDKLKDEVYRILKVLFLFEFDEQGRELQKTFQDTLQLVERSLPEIWTLTYQQNSAMPVLGPSSTANSIMASYQQQKTSVPVLDAELFVPPKINRKTQWKLSLLE</sequence>
<gene>
    <name type="primary">ELP1</name>
    <name type="synonym">IKAP</name>
    <name type="synonym">IKBKAP</name>
</gene>
<organism>
    <name type="scientific">Oryctolagus cuniculus</name>
    <name type="common">Rabbit</name>
    <dbReference type="NCBI Taxonomy" id="9986"/>
    <lineage>
        <taxon>Eukaryota</taxon>
        <taxon>Metazoa</taxon>
        <taxon>Chordata</taxon>
        <taxon>Craniata</taxon>
        <taxon>Vertebrata</taxon>
        <taxon>Euteleostomi</taxon>
        <taxon>Mammalia</taxon>
        <taxon>Eutheria</taxon>
        <taxon>Euarchontoglires</taxon>
        <taxon>Glires</taxon>
        <taxon>Lagomorpha</taxon>
        <taxon>Leporidae</taxon>
        <taxon>Oryctolagus</taxon>
    </lineage>
</organism>